<feature type="chain" id="PRO_0000271034" description="Ribonuclease P protein subunit p20">
    <location>
        <begin position="1"/>
        <end position="140"/>
    </location>
</feature>
<dbReference type="EMBL" id="BC122839">
    <property type="protein sequence ID" value="AAI22840.1"/>
    <property type="molecule type" value="mRNA"/>
</dbReference>
<dbReference type="RefSeq" id="NP_001069950.1">
    <property type="nucleotide sequence ID" value="NM_001076482.2"/>
</dbReference>
<dbReference type="RefSeq" id="XP_005225275.1">
    <property type="nucleotide sequence ID" value="XM_005225218.2"/>
</dbReference>
<dbReference type="RefSeq" id="XP_005225276.1">
    <property type="nucleotide sequence ID" value="XM_005225219.1"/>
</dbReference>
<dbReference type="RefSeq" id="XP_015315985.1">
    <property type="nucleotide sequence ID" value="XM_015460499.3"/>
</dbReference>
<dbReference type="SMR" id="Q0II25"/>
<dbReference type="FunCoup" id="Q0II25">
    <property type="interactions" value="2530"/>
</dbReference>
<dbReference type="STRING" id="9913.ENSBTAP00000037068"/>
<dbReference type="PaxDb" id="9913-ENSBTAP00000037068"/>
<dbReference type="Ensembl" id="ENSBTAT00000111476.1">
    <property type="protein sequence ID" value="ENSBTAP00000088842.1"/>
    <property type="gene ID" value="ENSBTAG00000026248.4"/>
</dbReference>
<dbReference type="Ensembl" id="ENSBTAT00000115325.1">
    <property type="protein sequence ID" value="ENSBTAP00000089660.1"/>
    <property type="gene ID" value="ENSBTAG00000026248.4"/>
</dbReference>
<dbReference type="Ensembl" id="ENSBTAT00000133987.1">
    <property type="protein sequence ID" value="ENSBTAP00000098343.1"/>
    <property type="gene ID" value="ENSBTAG00000026248.4"/>
</dbReference>
<dbReference type="GeneID" id="617906"/>
<dbReference type="KEGG" id="bta:617906"/>
<dbReference type="CTD" id="10248"/>
<dbReference type="VGNC" id="VGNC:33166">
    <property type="gene designation" value="POP7"/>
</dbReference>
<dbReference type="eggNOG" id="KOG3631">
    <property type="taxonomic scope" value="Eukaryota"/>
</dbReference>
<dbReference type="GeneTree" id="ENSGT00510000048483"/>
<dbReference type="HOGENOM" id="CLU_130587_1_0_1"/>
<dbReference type="InParanoid" id="Q0II25"/>
<dbReference type="OrthoDB" id="416729at2759"/>
<dbReference type="TreeFam" id="TF313948"/>
<dbReference type="Proteomes" id="UP000009136">
    <property type="component" value="Chromosome 25"/>
</dbReference>
<dbReference type="GO" id="GO:0005737">
    <property type="term" value="C:cytoplasm"/>
    <property type="evidence" value="ECO:0007669"/>
    <property type="project" value="UniProtKB-SubCell"/>
</dbReference>
<dbReference type="GO" id="GO:0030681">
    <property type="term" value="C:multimeric ribonuclease P complex"/>
    <property type="evidence" value="ECO:0000250"/>
    <property type="project" value="UniProtKB"/>
</dbReference>
<dbReference type="GO" id="GO:0005655">
    <property type="term" value="C:nucleolar ribonuclease P complex"/>
    <property type="evidence" value="ECO:0007669"/>
    <property type="project" value="InterPro"/>
</dbReference>
<dbReference type="GO" id="GO:0005730">
    <property type="term" value="C:nucleolus"/>
    <property type="evidence" value="ECO:0000250"/>
    <property type="project" value="UniProtKB"/>
</dbReference>
<dbReference type="GO" id="GO:0005634">
    <property type="term" value="C:nucleus"/>
    <property type="evidence" value="ECO:0000318"/>
    <property type="project" value="GO_Central"/>
</dbReference>
<dbReference type="GO" id="GO:0000172">
    <property type="term" value="C:ribonuclease MRP complex"/>
    <property type="evidence" value="ECO:0007669"/>
    <property type="project" value="InterPro"/>
</dbReference>
<dbReference type="GO" id="GO:0004526">
    <property type="term" value="F:ribonuclease P activity"/>
    <property type="evidence" value="ECO:0007669"/>
    <property type="project" value="UniProtKB-EC"/>
</dbReference>
<dbReference type="GO" id="GO:0033204">
    <property type="term" value="F:ribonuclease P RNA binding"/>
    <property type="evidence" value="ECO:0000250"/>
    <property type="project" value="UniProtKB"/>
</dbReference>
<dbReference type="GO" id="GO:0006364">
    <property type="term" value="P:rRNA processing"/>
    <property type="evidence" value="ECO:0007669"/>
    <property type="project" value="UniProtKB-KW"/>
</dbReference>
<dbReference type="GO" id="GO:0001682">
    <property type="term" value="P:tRNA 5'-leader removal"/>
    <property type="evidence" value="ECO:0000250"/>
    <property type="project" value="UniProtKB"/>
</dbReference>
<dbReference type="GO" id="GO:0008033">
    <property type="term" value="P:tRNA processing"/>
    <property type="evidence" value="ECO:0000318"/>
    <property type="project" value="GO_Central"/>
</dbReference>
<dbReference type="FunFam" id="3.30.110.20:FF:000002">
    <property type="entry name" value="Ribonuclease P protein subunit p20"/>
    <property type="match status" value="1"/>
</dbReference>
<dbReference type="Gene3D" id="3.30.110.20">
    <property type="entry name" value="Alba-like domain"/>
    <property type="match status" value="1"/>
</dbReference>
<dbReference type="InterPro" id="IPR036882">
    <property type="entry name" value="Alba-like_dom_sf"/>
</dbReference>
<dbReference type="InterPro" id="IPR014612">
    <property type="entry name" value="Pop7/Rpp20"/>
</dbReference>
<dbReference type="PANTHER" id="PTHR15314">
    <property type="entry name" value="RIBONUCLEASE P PROTEIN SUBUNIT P20"/>
    <property type="match status" value="1"/>
</dbReference>
<dbReference type="PANTHER" id="PTHR15314:SF1">
    <property type="entry name" value="RIBONUCLEASE P PROTEIN SUBUNIT P20"/>
    <property type="match status" value="1"/>
</dbReference>
<dbReference type="Pfam" id="PF12328">
    <property type="entry name" value="Rpp20"/>
    <property type="match status" value="1"/>
</dbReference>
<dbReference type="PIRSF" id="PIRSF036572">
    <property type="entry name" value="RPP20"/>
    <property type="match status" value="1"/>
</dbReference>
<dbReference type="SUPFAM" id="SSF82704">
    <property type="entry name" value="AlbA-like"/>
    <property type="match status" value="1"/>
</dbReference>
<name>POP7_BOVIN</name>
<evidence type="ECO:0000250" key="1">
    <source>
        <dbReference type="UniProtKB" id="O75817"/>
    </source>
</evidence>
<evidence type="ECO:0000305" key="2"/>
<accession>Q0II25</accession>
<reference key="1">
    <citation type="submission" date="2006-08" db="EMBL/GenBank/DDBJ databases">
        <authorList>
            <consortium name="NIH - Mammalian Gene Collection (MGC) project"/>
        </authorList>
    </citation>
    <scope>NUCLEOTIDE SEQUENCE [LARGE SCALE MRNA]</scope>
    <source>
        <strain>Hereford</strain>
        <tissue>Hypothalamus</tissue>
    </source>
</reference>
<protein>
    <recommendedName>
        <fullName>Ribonuclease P protein subunit p20</fullName>
        <shortName>RNaseP protein p20</shortName>
    </recommendedName>
</protein>
<organism>
    <name type="scientific">Bos taurus</name>
    <name type="common">Bovine</name>
    <dbReference type="NCBI Taxonomy" id="9913"/>
    <lineage>
        <taxon>Eukaryota</taxon>
        <taxon>Metazoa</taxon>
        <taxon>Chordata</taxon>
        <taxon>Craniata</taxon>
        <taxon>Vertebrata</taxon>
        <taxon>Euteleostomi</taxon>
        <taxon>Mammalia</taxon>
        <taxon>Eutheria</taxon>
        <taxon>Laurasiatheria</taxon>
        <taxon>Artiodactyla</taxon>
        <taxon>Ruminantia</taxon>
        <taxon>Pecora</taxon>
        <taxon>Bovidae</taxon>
        <taxon>Bovinae</taxon>
        <taxon>Bos</taxon>
    </lineage>
</organism>
<keyword id="KW-0963">Cytoplasm</keyword>
<keyword id="KW-0539">Nucleus</keyword>
<keyword id="KW-1185">Reference proteome</keyword>
<keyword id="KW-0698">rRNA processing</keyword>
<keyword id="KW-0819">tRNA processing</keyword>
<gene>
    <name type="primary">POP7</name>
    <name type="synonym">RPP20</name>
</gene>
<sequence>MAENRESRGTVEAELDPVEYTLRKRLPHRLPRRPNDIYVNMKTDFKAQLARCQKLLDGGARGQNACSEIYIHGLGLAINRAINIALQLQAGSFGSLQVAANTSTVELVDELEPETDSREPLTRIRNNSAIHIRVFRVTPK</sequence>
<proteinExistence type="evidence at transcript level"/>
<comment type="function">
    <text evidence="1">Component of ribonuclease P, a ribonucleoprotein complex that generates mature tRNA molecules by cleaving their 5'-ends. Also a component of the MRP ribonuclease complex, which cleaves pre-rRNA sequences.</text>
</comment>
<comment type="subunit">
    <text evidence="1">Component of nuclear RNase P and RNase MRP complexes. RNase P consists of a catalytic RNA moiety and 10 different protein chains; POP1, POP4, POP5, POP7, RPP14, RPP21, RPP25, RPP30, RPP38 and RPP40. Within the RNase P complex, POP1, POP7 and RPP25 form the 'finger' subcomplex, POP5, RPP14, RPP40 and homodimeric RPP30 form the 'palm' subcomplex, and RPP21, POP4 and RPP38 form the 'wrist' subcomplex. All subunits of the RNase P complex interact with the catalytic RNA. Several subunits of RNase P are also part of the RNase MRP complex. RNase MRP consists of a catalytic RNA moiety and about 8 protein subunits; POP1, POP7, RPP25, RPP30, RPP38, RPP40 and possibly also POP4 and POP5. Interacts with SMN1. POP7 forms a heterodimer with RPP25 that binds to the P3 stem loop of the catalytic RNA.</text>
</comment>
<comment type="subcellular location">
    <subcellularLocation>
        <location evidence="1">Nucleus</location>
        <location evidence="1">Nucleolus</location>
    </subcellularLocation>
    <subcellularLocation>
        <location evidence="1">Cytoplasm</location>
    </subcellularLocation>
    <subcellularLocation>
        <location evidence="1">Cytoplasmic granule</location>
    </subcellularLocation>
    <text evidence="1">Under stress conditions colocalizes with SMN1 in punctuated cytoplasmic granules.</text>
</comment>
<comment type="similarity">
    <text evidence="2">Belongs to the histone-like Alba family.</text>
</comment>